<reference key="1">
    <citation type="journal article" date="2006" name="BMC Plant Biol.">
        <title>The complete chloroplast genome sequence of Citrus sinensis (L.) Osbeck var 'Ridge Pineapple': organization and phylogenetic relationships to other angiosperms.</title>
        <authorList>
            <person name="Bausher M.G."/>
            <person name="Singh N.D."/>
            <person name="Lee S.-B."/>
            <person name="Jansen R.K."/>
            <person name="Daniell H."/>
        </authorList>
    </citation>
    <scope>NUCLEOTIDE SEQUENCE [LARGE SCALE GENOMIC DNA]</scope>
    <source>
        <strain>cv. Osbeck var. Ridge Pineapple</strain>
    </source>
</reference>
<gene>
    <name evidence="1" type="primary">psaB</name>
</gene>
<accession>Q09MH9</accession>
<evidence type="ECO:0000255" key="1">
    <source>
        <dbReference type="HAMAP-Rule" id="MF_00482"/>
    </source>
</evidence>
<keyword id="KW-0004">4Fe-4S</keyword>
<keyword id="KW-0148">Chlorophyll</keyword>
<keyword id="KW-0150">Chloroplast</keyword>
<keyword id="KW-0157">Chromophore</keyword>
<keyword id="KW-0249">Electron transport</keyword>
<keyword id="KW-0408">Iron</keyword>
<keyword id="KW-0411">Iron-sulfur</keyword>
<keyword id="KW-0460">Magnesium</keyword>
<keyword id="KW-0472">Membrane</keyword>
<keyword id="KW-0479">Metal-binding</keyword>
<keyword id="KW-0560">Oxidoreductase</keyword>
<keyword id="KW-0602">Photosynthesis</keyword>
<keyword id="KW-0603">Photosystem I</keyword>
<keyword id="KW-0934">Plastid</keyword>
<keyword id="KW-0793">Thylakoid</keyword>
<keyword id="KW-0812">Transmembrane</keyword>
<keyword id="KW-1133">Transmembrane helix</keyword>
<keyword id="KW-0813">Transport</keyword>
<feature type="chain" id="PRO_0000277108" description="Photosystem I P700 chlorophyll a apoprotein A2">
    <location>
        <begin position="1"/>
        <end position="734"/>
    </location>
</feature>
<feature type="transmembrane region" description="Helical; Name=I" evidence="1">
    <location>
        <begin position="46"/>
        <end position="69"/>
    </location>
</feature>
<feature type="transmembrane region" description="Helical; Name=II" evidence="1">
    <location>
        <begin position="135"/>
        <end position="158"/>
    </location>
</feature>
<feature type="transmembrane region" description="Helical; Name=III" evidence="1">
    <location>
        <begin position="175"/>
        <end position="199"/>
    </location>
</feature>
<feature type="transmembrane region" description="Helical; Name=IV" evidence="1">
    <location>
        <begin position="273"/>
        <end position="291"/>
    </location>
</feature>
<feature type="transmembrane region" description="Helical; Name=V" evidence="1">
    <location>
        <begin position="330"/>
        <end position="353"/>
    </location>
</feature>
<feature type="transmembrane region" description="Helical; Name=VI" evidence="1">
    <location>
        <begin position="369"/>
        <end position="395"/>
    </location>
</feature>
<feature type="transmembrane region" description="Helical; Name=VII" evidence="1">
    <location>
        <begin position="417"/>
        <end position="439"/>
    </location>
</feature>
<feature type="transmembrane region" description="Helical; Name=VIII" evidence="1">
    <location>
        <begin position="517"/>
        <end position="535"/>
    </location>
</feature>
<feature type="transmembrane region" description="Helical; Name=IX" evidence="1">
    <location>
        <begin position="575"/>
        <end position="596"/>
    </location>
</feature>
<feature type="transmembrane region" description="Helical; Name=X" evidence="1">
    <location>
        <begin position="643"/>
        <end position="665"/>
    </location>
</feature>
<feature type="transmembrane region" description="Helical; Name=XI" evidence="1">
    <location>
        <begin position="707"/>
        <end position="727"/>
    </location>
</feature>
<feature type="binding site" evidence="1">
    <location>
        <position position="559"/>
    </location>
    <ligand>
        <name>[4Fe-4S] cluster</name>
        <dbReference type="ChEBI" id="CHEBI:49883"/>
        <note>ligand shared between dimeric partners</note>
    </ligand>
</feature>
<feature type="binding site" evidence="1">
    <location>
        <position position="568"/>
    </location>
    <ligand>
        <name>[4Fe-4S] cluster</name>
        <dbReference type="ChEBI" id="CHEBI:49883"/>
        <note>ligand shared between dimeric partners</note>
    </ligand>
</feature>
<feature type="binding site" description="axial binding residue" evidence="1">
    <location>
        <position position="654"/>
    </location>
    <ligand>
        <name>chlorophyll a</name>
        <dbReference type="ChEBI" id="CHEBI:58416"/>
        <label>B1</label>
    </ligand>
    <ligandPart>
        <name>Mg</name>
        <dbReference type="ChEBI" id="CHEBI:25107"/>
    </ligandPart>
</feature>
<feature type="binding site" description="axial binding residue" evidence="1">
    <location>
        <position position="662"/>
    </location>
    <ligand>
        <name>chlorophyll a</name>
        <dbReference type="ChEBI" id="CHEBI:58416"/>
        <label>B3</label>
    </ligand>
    <ligandPart>
        <name>Mg</name>
        <dbReference type="ChEBI" id="CHEBI:25107"/>
    </ligandPart>
</feature>
<feature type="binding site" evidence="1">
    <location>
        <position position="670"/>
    </location>
    <ligand>
        <name>chlorophyll a</name>
        <dbReference type="ChEBI" id="CHEBI:58416"/>
        <label>B3</label>
    </ligand>
</feature>
<feature type="binding site" evidence="1">
    <location>
        <position position="671"/>
    </location>
    <ligand>
        <name>phylloquinone</name>
        <dbReference type="ChEBI" id="CHEBI:18067"/>
        <label>B</label>
    </ligand>
</feature>
<geneLocation type="chloroplast"/>
<protein>
    <recommendedName>
        <fullName evidence="1">Photosystem I P700 chlorophyll a apoprotein A2</fullName>
        <ecNumber evidence="1">1.97.1.12</ecNumber>
    </recommendedName>
    <alternativeName>
        <fullName evidence="1">PSI-B</fullName>
    </alternativeName>
    <alternativeName>
        <fullName evidence="1">PsaB</fullName>
    </alternativeName>
</protein>
<dbReference type="EC" id="1.97.1.12" evidence="1"/>
<dbReference type="EMBL" id="DQ864733">
    <property type="protein sequence ID" value="ABI49019.1"/>
    <property type="molecule type" value="Genomic_DNA"/>
</dbReference>
<dbReference type="RefSeq" id="YP_740474.1">
    <property type="nucleotide sequence ID" value="NC_008334.1"/>
</dbReference>
<dbReference type="SMR" id="Q09MH9"/>
<dbReference type="GeneID" id="4271130"/>
<dbReference type="KEGG" id="cit:4271130"/>
<dbReference type="OrthoDB" id="679008at71240"/>
<dbReference type="GO" id="GO:0009535">
    <property type="term" value="C:chloroplast thylakoid membrane"/>
    <property type="evidence" value="ECO:0007669"/>
    <property type="project" value="UniProtKB-SubCell"/>
</dbReference>
<dbReference type="GO" id="GO:0009522">
    <property type="term" value="C:photosystem I"/>
    <property type="evidence" value="ECO:0007669"/>
    <property type="project" value="UniProtKB-KW"/>
</dbReference>
<dbReference type="GO" id="GO:0051539">
    <property type="term" value="F:4 iron, 4 sulfur cluster binding"/>
    <property type="evidence" value="ECO:0007669"/>
    <property type="project" value="UniProtKB-KW"/>
</dbReference>
<dbReference type="GO" id="GO:0016168">
    <property type="term" value="F:chlorophyll binding"/>
    <property type="evidence" value="ECO:0007669"/>
    <property type="project" value="UniProtKB-KW"/>
</dbReference>
<dbReference type="GO" id="GO:0009055">
    <property type="term" value="F:electron transfer activity"/>
    <property type="evidence" value="ECO:0007669"/>
    <property type="project" value="UniProtKB-UniRule"/>
</dbReference>
<dbReference type="GO" id="GO:0000287">
    <property type="term" value="F:magnesium ion binding"/>
    <property type="evidence" value="ECO:0007669"/>
    <property type="project" value="UniProtKB-UniRule"/>
</dbReference>
<dbReference type="GO" id="GO:0016491">
    <property type="term" value="F:oxidoreductase activity"/>
    <property type="evidence" value="ECO:0007669"/>
    <property type="project" value="UniProtKB-KW"/>
</dbReference>
<dbReference type="GO" id="GO:0015979">
    <property type="term" value="P:photosynthesis"/>
    <property type="evidence" value="ECO:0007669"/>
    <property type="project" value="UniProtKB-UniRule"/>
</dbReference>
<dbReference type="FunFam" id="1.20.1130.10:FF:000001">
    <property type="entry name" value="Photosystem I P700 chlorophyll a apoprotein A2"/>
    <property type="match status" value="1"/>
</dbReference>
<dbReference type="Gene3D" id="1.20.1130.10">
    <property type="entry name" value="Photosystem I PsaA/PsaB"/>
    <property type="match status" value="1"/>
</dbReference>
<dbReference type="HAMAP" id="MF_00482">
    <property type="entry name" value="PSI_PsaB"/>
    <property type="match status" value="1"/>
</dbReference>
<dbReference type="InterPro" id="IPR001280">
    <property type="entry name" value="PSI_PsaA/B"/>
</dbReference>
<dbReference type="InterPro" id="IPR020586">
    <property type="entry name" value="PSI_PsaA/B_CS"/>
</dbReference>
<dbReference type="InterPro" id="IPR036408">
    <property type="entry name" value="PSI_PsaA/B_sf"/>
</dbReference>
<dbReference type="InterPro" id="IPR006244">
    <property type="entry name" value="PSI_PsaB"/>
</dbReference>
<dbReference type="NCBIfam" id="TIGR01336">
    <property type="entry name" value="psaB"/>
    <property type="match status" value="1"/>
</dbReference>
<dbReference type="PANTHER" id="PTHR30128">
    <property type="entry name" value="OUTER MEMBRANE PROTEIN, OMPA-RELATED"/>
    <property type="match status" value="1"/>
</dbReference>
<dbReference type="PANTHER" id="PTHR30128:SF19">
    <property type="entry name" value="PHOTOSYSTEM I P700 CHLOROPHYLL A APOPROTEIN A1-RELATED"/>
    <property type="match status" value="1"/>
</dbReference>
<dbReference type="Pfam" id="PF00223">
    <property type="entry name" value="PsaA_PsaB"/>
    <property type="match status" value="1"/>
</dbReference>
<dbReference type="PIRSF" id="PIRSF002905">
    <property type="entry name" value="PSI_A"/>
    <property type="match status" value="1"/>
</dbReference>
<dbReference type="PRINTS" id="PR00257">
    <property type="entry name" value="PHOTSYSPSAAB"/>
</dbReference>
<dbReference type="SUPFAM" id="SSF81558">
    <property type="entry name" value="Photosystem I subunits PsaA/PsaB"/>
    <property type="match status" value="1"/>
</dbReference>
<dbReference type="PROSITE" id="PS00419">
    <property type="entry name" value="PHOTOSYSTEM_I_PSAAB"/>
    <property type="match status" value="1"/>
</dbReference>
<comment type="function">
    <text evidence="1">PsaA and PsaB bind P700, the primary electron donor of photosystem I (PSI), as well as the electron acceptors A0, A1 and FX. PSI is a plastocyanin-ferredoxin oxidoreductase, converting photonic excitation into a charge separation, which transfers an electron from the donor P700 chlorophyll pair to the spectroscopically characterized acceptors A0, A1, FX, FA and FB in turn. Oxidized P700 is reduced on the lumenal side of the thylakoid membrane by plastocyanin.</text>
</comment>
<comment type="catalytic activity">
    <reaction evidence="1">
        <text>reduced [plastocyanin] + hnu + oxidized [2Fe-2S]-[ferredoxin] = oxidized [plastocyanin] + reduced [2Fe-2S]-[ferredoxin]</text>
        <dbReference type="Rhea" id="RHEA:30407"/>
        <dbReference type="Rhea" id="RHEA-COMP:10000"/>
        <dbReference type="Rhea" id="RHEA-COMP:10001"/>
        <dbReference type="Rhea" id="RHEA-COMP:10039"/>
        <dbReference type="Rhea" id="RHEA-COMP:10040"/>
        <dbReference type="ChEBI" id="CHEBI:29036"/>
        <dbReference type="ChEBI" id="CHEBI:30212"/>
        <dbReference type="ChEBI" id="CHEBI:33737"/>
        <dbReference type="ChEBI" id="CHEBI:33738"/>
        <dbReference type="ChEBI" id="CHEBI:49552"/>
        <dbReference type="EC" id="1.97.1.12"/>
    </reaction>
</comment>
<comment type="cofactor">
    <text evidence="1">P700 is a chlorophyll a/chlorophyll a' dimer, A0 is one or more chlorophyll a, A1 is one or both phylloquinones and FX is a shared 4Fe-4S iron-sulfur center.</text>
</comment>
<comment type="subunit">
    <text evidence="1">The PsaA/B heterodimer binds the P700 chlorophyll special pair and subsequent electron acceptors. PSI consists of a core antenna complex that captures photons, and an electron transfer chain that converts photonic excitation into a charge separation. The eukaryotic PSI reaction center is composed of at least 11 subunits.</text>
</comment>
<comment type="subcellular location">
    <subcellularLocation>
        <location>Plastid</location>
        <location>Chloroplast thylakoid membrane</location>
        <topology>Multi-pass membrane protein</topology>
    </subcellularLocation>
</comment>
<comment type="similarity">
    <text evidence="1">Belongs to the PsaA/PsaB family.</text>
</comment>
<sequence>MALRFPRFSQGLAQDPTTRRIWFGIATAHDFESHDDITEERLYQNIFASHFGQLAIIFLWTSGNLFHVAWQGNFEAWVQDPLHVRPIAHAIWDPHFGQPAVEAFSRGGALGPVNIAYSGVYQWWYTIGLRTNEDLYTGALFLLFLSAISLIAGWLHLQPKWKPSVSWFKNAESRLNHHLSGLFGVSSLAWTGHLVHVAIPGSRGEYVRWNNFLDVLPHPQGLGPLFTGQWNLYAQNPDSSSHLFGTSQGSGTAILTLLGGFHPQTQSLWLTDIAHHHLAIAFIFLVAGHMYRTNFGIGHSIKDLLEAHIPPGGRLGRGHKGLYDTINNSLHFQLGLALASLGVITSLVAQHMYSLPAYAFIAQDFTTQAALYTHHQYIAGFIMTGAFAHGAIFFIRDYNPEQNEDNVLARMLDHKEAIISHLSWASLFLGFHTLGLYVHNDVMLAFGTPEKQILIEPIFAQWIQSAHGKTSYGFDVLLSSTDGPAFNAGRSIWLPGWLSAVNENSNSLFLTIGPGDFLVHHAIALGLHTTTLILVKGALDARGSKLMPDKKDFGYSFPCDGPGRGGTCDISAWDAFYLAVFWMLNTIGWVTFYWHWNHITLWQGNVSQFNESSTYLMGWLRDYLWLNSSQLINGYNPFGMNSLSVWAWMFLFGHLVWATGFMFLISWRGYWQELIETLAWAHERTPLANLIRWRDKPVALSIVQARLVGLAHFSVGYIFTYAAFLIASTSGKFG</sequence>
<proteinExistence type="inferred from homology"/>
<name>PSAB_CITSI</name>
<organism>
    <name type="scientific">Citrus sinensis</name>
    <name type="common">Sweet orange</name>
    <name type="synonym">Citrus aurantium var. sinensis</name>
    <dbReference type="NCBI Taxonomy" id="2711"/>
    <lineage>
        <taxon>Eukaryota</taxon>
        <taxon>Viridiplantae</taxon>
        <taxon>Streptophyta</taxon>
        <taxon>Embryophyta</taxon>
        <taxon>Tracheophyta</taxon>
        <taxon>Spermatophyta</taxon>
        <taxon>Magnoliopsida</taxon>
        <taxon>eudicotyledons</taxon>
        <taxon>Gunneridae</taxon>
        <taxon>Pentapetalae</taxon>
        <taxon>rosids</taxon>
        <taxon>malvids</taxon>
        <taxon>Sapindales</taxon>
        <taxon>Rutaceae</taxon>
        <taxon>Aurantioideae</taxon>
        <taxon>Citrus</taxon>
    </lineage>
</organism>